<reference key="1">
    <citation type="submission" date="1999-01" db="UniProtKB">
        <title>Thrombostatin, a potent inhibitor of platelet aggregation from the venom of the green mamba.</title>
        <authorList>
            <person name="Valant P.A."/>
            <person name="Potter L.T."/>
        </authorList>
    </citation>
    <scope>PROTEIN SEQUENCE</scope>
    <scope>SUBCELLULAR LOCATION</scope>
    <source>
        <tissue>Venom</tissue>
    </source>
</reference>
<name>3SPT_DENAN</name>
<organism>
    <name type="scientific">Dendroaspis angusticeps</name>
    <name type="common">Eastern green mamba</name>
    <name type="synonym">Naja angusticeps</name>
    <dbReference type="NCBI Taxonomy" id="8618"/>
    <lineage>
        <taxon>Eukaryota</taxon>
        <taxon>Metazoa</taxon>
        <taxon>Chordata</taxon>
        <taxon>Craniata</taxon>
        <taxon>Vertebrata</taxon>
        <taxon>Euteleostomi</taxon>
        <taxon>Lepidosauria</taxon>
        <taxon>Squamata</taxon>
        <taxon>Bifurcata</taxon>
        <taxon>Unidentata</taxon>
        <taxon>Episquamata</taxon>
        <taxon>Toxicofera</taxon>
        <taxon>Serpentes</taxon>
        <taxon>Colubroidea</taxon>
        <taxon>Elapidae</taxon>
        <taxon>Elapinae</taxon>
        <taxon>Dendroaspis</taxon>
    </lineage>
</organism>
<evidence type="ECO:0000250" key="1">
    <source>
        <dbReference type="UniProtKB" id="P28375"/>
    </source>
</evidence>
<evidence type="ECO:0000255" key="2"/>
<evidence type="ECO:0000269" key="3">
    <source ref="1"/>
</evidence>
<evidence type="ECO:0000305" key="4"/>
<proteinExistence type="evidence at protein level"/>
<protein>
    <recommendedName>
        <fullName>Thrombostatin</fullName>
    </recommendedName>
    <alternativeName>
        <fullName>Glycoprotein IIb-IIIa antagonist</fullName>
    </alternativeName>
    <alternativeName>
        <fullName>Platelet aggregation inhibitor</fullName>
    </alternativeName>
</protein>
<comment type="function">
    <text evidence="1">Inhibits ADP-induced platelet aggregation and inhibits the binding of purified platelet fibrinogen receptor alpha-IIb/beta-3 (ITGA2B/ITGB3) to immobilized fibrinogen.</text>
</comment>
<comment type="subcellular location">
    <subcellularLocation>
        <location evidence="3">Secreted</location>
    </subcellularLocation>
</comment>
<comment type="tissue specificity">
    <text evidence="4">Expressed by the venom gland.</text>
</comment>
<comment type="similarity">
    <text evidence="4">Belongs to the three-finger toxin family. Short-chain subfamily. Antiplatelet toxin sub-subfamily.</text>
</comment>
<dbReference type="SMR" id="P81946"/>
<dbReference type="GO" id="GO:0005576">
    <property type="term" value="C:extracellular region"/>
    <property type="evidence" value="ECO:0007669"/>
    <property type="project" value="UniProtKB-SubCell"/>
</dbReference>
<dbReference type="GO" id="GO:0090729">
    <property type="term" value="F:toxin activity"/>
    <property type="evidence" value="ECO:0007669"/>
    <property type="project" value="UniProtKB-KW"/>
</dbReference>
<dbReference type="CDD" id="cd00206">
    <property type="entry name" value="TFP_snake_toxin"/>
    <property type="match status" value="1"/>
</dbReference>
<dbReference type="Gene3D" id="2.10.60.10">
    <property type="entry name" value="CD59"/>
    <property type="match status" value="1"/>
</dbReference>
<dbReference type="InterPro" id="IPR003571">
    <property type="entry name" value="Snake_3FTx"/>
</dbReference>
<dbReference type="InterPro" id="IPR045860">
    <property type="entry name" value="Snake_toxin-like_sf"/>
</dbReference>
<dbReference type="InterPro" id="IPR054131">
    <property type="entry name" value="Toxin_cobra-type"/>
</dbReference>
<dbReference type="Pfam" id="PF21947">
    <property type="entry name" value="Toxin_cobra-type"/>
    <property type="match status" value="1"/>
</dbReference>
<dbReference type="SUPFAM" id="SSF57302">
    <property type="entry name" value="Snake toxin-like"/>
    <property type="match status" value="1"/>
</dbReference>
<sequence length="59" mass="6670">LICYNQLGTKPPTTETCGDDSCYKMIWTYDGVIRRGCGCFTPRGDMPRPRCCKSDKCNL</sequence>
<keyword id="KW-1217">Cell adhesion impairing toxin</keyword>
<keyword id="KW-0903">Direct protein sequencing</keyword>
<keyword id="KW-1015">Disulfide bond</keyword>
<keyword id="KW-1199">Hemostasis impairing toxin</keyword>
<keyword id="KW-1201">Platelet aggregation inhibiting toxin</keyword>
<keyword id="KW-0964">Secreted</keyword>
<keyword id="KW-0800">Toxin</keyword>
<feature type="chain" id="PRO_0000093657" description="Thrombostatin" evidence="3">
    <location>
        <begin position="1"/>
        <end position="59"/>
    </location>
</feature>
<feature type="short sequence motif" description="Cell attachment site" evidence="2">
    <location>
        <begin position="43"/>
        <end position="45"/>
    </location>
</feature>
<feature type="disulfide bond" evidence="1">
    <location>
        <begin position="3"/>
        <end position="22"/>
    </location>
</feature>
<feature type="disulfide bond" evidence="1">
    <location>
        <begin position="17"/>
        <end position="37"/>
    </location>
</feature>
<feature type="disulfide bond" evidence="1">
    <location>
        <begin position="39"/>
        <end position="51"/>
    </location>
</feature>
<feature type="disulfide bond" evidence="1">
    <location>
        <begin position="52"/>
        <end position="57"/>
    </location>
</feature>
<accession>P81946</accession>